<comment type="function">
    <text evidence="1">Catalyzes the reversible formation of acyl-phosphate (acyl-PO(4)) from acyl-[acyl-carrier-protein] (acyl-ACP). This enzyme utilizes acyl-ACP as fatty acyl donor, but not acyl-CoA.</text>
</comment>
<comment type="catalytic activity">
    <reaction evidence="1">
        <text>a fatty acyl-[ACP] + phosphate = an acyl phosphate + holo-[ACP]</text>
        <dbReference type="Rhea" id="RHEA:42292"/>
        <dbReference type="Rhea" id="RHEA-COMP:9685"/>
        <dbReference type="Rhea" id="RHEA-COMP:14125"/>
        <dbReference type="ChEBI" id="CHEBI:43474"/>
        <dbReference type="ChEBI" id="CHEBI:59918"/>
        <dbReference type="ChEBI" id="CHEBI:64479"/>
        <dbReference type="ChEBI" id="CHEBI:138651"/>
        <dbReference type="EC" id="2.3.1.274"/>
    </reaction>
</comment>
<comment type="pathway">
    <text evidence="1">Lipid metabolism; phospholipid metabolism.</text>
</comment>
<comment type="subunit">
    <text evidence="1">Homodimer. Probably interacts with PlsY.</text>
</comment>
<comment type="subcellular location">
    <subcellularLocation>
        <location evidence="1">Cytoplasm</location>
    </subcellularLocation>
    <text evidence="1">Associated with the membrane possibly through PlsY.</text>
</comment>
<comment type="similarity">
    <text evidence="1">Belongs to the PlsX family.</text>
</comment>
<feature type="chain" id="PRO_0000189912" description="Phosphate acyltransferase">
    <location>
        <begin position="1"/>
        <end position="351"/>
    </location>
</feature>
<sequence>MITLAVDAMGGDQGLAVTVPGATAFLQAHPDVRLIMTGDETQLRQALTAAGAPMERIDICHTTQVVGMDEAPQSALKNKKDSSMRVAINQVKEGKAQAAVSAGNTGALMATARFVLKTIPGIERPAIAKFLPSDTDHVTLALDLGANVDCTSEQLAQFAVIGSELVHALHPQKGQPRVGLVNVGTEDIKGTDTVKQTYKLLQNSKLNFIGNIESNGILYGEADVVVADGFVGNVMLKTIEGAVKFMSGAIRREFQSNLFNKLAAVAALPALKGLKNKLDPRKFNGAILLGLRGIVIKSHGGTDETGFRYALEEAYHEAKSAGLSKIEQGVAEQLAALETAKAVQNENVGGL</sequence>
<gene>
    <name evidence="1" type="primary">plsX</name>
    <name type="ordered locus">NMB1913</name>
</gene>
<organism>
    <name type="scientific">Neisseria meningitidis serogroup B (strain ATCC BAA-335 / MC58)</name>
    <dbReference type="NCBI Taxonomy" id="122586"/>
    <lineage>
        <taxon>Bacteria</taxon>
        <taxon>Pseudomonadati</taxon>
        <taxon>Pseudomonadota</taxon>
        <taxon>Betaproteobacteria</taxon>
        <taxon>Neisseriales</taxon>
        <taxon>Neisseriaceae</taxon>
        <taxon>Neisseria</taxon>
    </lineage>
</organism>
<evidence type="ECO:0000255" key="1">
    <source>
        <dbReference type="HAMAP-Rule" id="MF_00019"/>
    </source>
</evidence>
<reference key="1">
    <citation type="journal article" date="2000" name="Science">
        <title>Complete genome sequence of Neisseria meningitidis serogroup B strain MC58.</title>
        <authorList>
            <person name="Tettelin H."/>
            <person name="Saunders N.J."/>
            <person name="Heidelberg J.F."/>
            <person name="Jeffries A.C."/>
            <person name="Nelson K.E."/>
            <person name="Eisen J.A."/>
            <person name="Ketchum K.A."/>
            <person name="Hood D.W."/>
            <person name="Peden J.F."/>
            <person name="Dodson R.J."/>
            <person name="Nelson W.C."/>
            <person name="Gwinn M.L."/>
            <person name="DeBoy R.T."/>
            <person name="Peterson J.D."/>
            <person name="Hickey E.K."/>
            <person name="Haft D.H."/>
            <person name="Salzberg S.L."/>
            <person name="White O."/>
            <person name="Fleischmann R.D."/>
            <person name="Dougherty B.A."/>
            <person name="Mason T.M."/>
            <person name="Ciecko A."/>
            <person name="Parksey D.S."/>
            <person name="Blair E."/>
            <person name="Cittone H."/>
            <person name="Clark E.B."/>
            <person name="Cotton M.D."/>
            <person name="Utterback T.R."/>
            <person name="Khouri H.M."/>
            <person name="Qin H."/>
            <person name="Vamathevan J.J."/>
            <person name="Gill J."/>
            <person name="Scarlato V."/>
            <person name="Masignani V."/>
            <person name="Pizza M."/>
            <person name="Grandi G."/>
            <person name="Sun L."/>
            <person name="Smith H.O."/>
            <person name="Fraser C.M."/>
            <person name="Moxon E.R."/>
            <person name="Rappuoli R."/>
            <person name="Venter J.C."/>
        </authorList>
    </citation>
    <scope>NUCLEOTIDE SEQUENCE [LARGE SCALE GENOMIC DNA]</scope>
    <source>
        <strain>ATCC BAA-335 / MC58</strain>
    </source>
</reference>
<dbReference type="EC" id="2.3.1.274" evidence="1"/>
<dbReference type="EMBL" id="AE002098">
    <property type="protein sequence ID" value="AAF42243.1"/>
    <property type="molecule type" value="Genomic_DNA"/>
</dbReference>
<dbReference type="PIR" id="H81028">
    <property type="entry name" value="H81028"/>
</dbReference>
<dbReference type="RefSeq" id="NP_274907.1">
    <property type="nucleotide sequence ID" value="NC_003112.2"/>
</dbReference>
<dbReference type="RefSeq" id="WP_010981006.1">
    <property type="nucleotide sequence ID" value="NC_003112.2"/>
</dbReference>
<dbReference type="SMR" id="Q9JXR8"/>
<dbReference type="FunCoup" id="Q9JXR8">
    <property type="interactions" value="266"/>
</dbReference>
<dbReference type="STRING" id="122586.NMB1913"/>
<dbReference type="PaxDb" id="122586-NMB1913"/>
<dbReference type="KEGG" id="nme:NMB1913"/>
<dbReference type="PATRIC" id="fig|122586.8.peg.2440"/>
<dbReference type="HOGENOM" id="CLU_039379_1_0_4"/>
<dbReference type="InParanoid" id="Q9JXR8"/>
<dbReference type="OrthoDB" id="9806408at2"/>
<dbReference type="UniPathway" id="UPA00085"/>
<dbReference type="Proteomes" id="UP000000425">
    <property type="component" value="Chromosome"/>
</dbReference>
<dbReference type="GO" id="GO:0005737">
    <property type="term" value="C:cytoplasm"/>
    <property type="evidence" value="ECO:0007669"/>
    <property type="project" value="UniProtKB-SubCell"/>
</dbReference>
<dbReference type="GO" id="GO:0043811">
    <property type="term" value="F:phosphate:acyl-[acyl carrier protein] acyltransferase activity"/>
    <property type="evidence" value="ECO:0007669"/>
    <property type="project" value="UniProtKB-UniRule"/>
</dbReference>
<dbReference type="GO" id="GO:0006633">
    <property type="term" value="P:fatty acid biosynthetic process"/>
    <property type="evidence" value="ECO:0007669"/>
    <property type="project" value="UniProtKB-UniRule"/>
</dbReference>
<dbReference type="GO" id="GO:0008654">
    <property type="term" value="P:phospholipid biosynthetic process"/>
    <property type="evidence" value="ECO:0007669"/>
    <property type="project" value="UniProtKB-KW"/>
</dbReference>
<dbReference type="Gene3D" id="3.40.718.10">
    <property type="entry name" value="Isopropylmalate Dehydrogenase"/>
    <property type="match status" value="1"/>
</dbReference>
<dbReference type="HAMAP" id="MF_00019">
    <property type="entry name" value="PlsX"/>
    <property type="match status" value="1"/>
</dbReference>
<dbReference type="InterPro" id="IPR003664">
    <property type="entry name" value="FA_synthesis"/>
</dbReference>
<dbReference type="InterPro" id="IPR012281">
    <property type="entry name" value="Phospholipid_synth_PlsX-like"/>
</dbReference>
<dbReference type="NCBIfam" id="TIGR00182">
    <property type="entry name" value="plsX"/>
    <property type="match status" value="1"/>
</dbReference>
<dbReference type="PANTHER" id="PTHR30100">
    <property type="entry name" value="FATTY ACID/PHOSPHOLIPID SYNTHESIS PROTEIN PLSX"/>
    <property type="match status" value="1"/>
</dbReference>
<dbReference type="PANTHER" id="PTHR30100:SF1">
    <property type="entry name" value="PHOSPHATE ACYLTRANSFERASE"/>
    <property type="match status" value="1"/>
</dbReference>
<dbReference type="Pfam" id="PF02504">
    <property type="entry name" value="FA_synthesis"/>
    <property type="match status" value="1"/>
</dbReference>
<dbReference type="PIRSF" id="PIRSF002465">
    <property type="entry name" value="Phsphlp_syn_PlsX"/>
    <property type="match status" value="1"/>
</dbReference>
<dbReference type="SUPFAM" id="SSF53659">
    <property type="entry name" value="Isocitrate/Isopropylmalate dehydrogenase-like"/>
    <property type="match status" value="1"/>
</dbReference>
<name>PLSX_NEIMB</name>
<protein>
    <recommendedName>
        <fullName evidence="1">Phosphate acyltransferase</fullName>
        <ecNumber evidence="1">2.3.1.274</ecNumber>
    </recommendedName>
    <alternativeName>
        <fullName evidence="1">Acyl-ACP phosphotransacylase</fullName>
    </alternativeName>
    <alternativeName>
        <fullName evidence="1">Acyl-[acyl-carrier-protein]--phosphate acyltransferase</fullName>
    </alternativeName>
    <alternativeName>
        <fullName evidence="1">Phosphate-acyl-ACP acyltransferase</fullName>
    </alternativeName>
</protein>
<keyword id="KW-0963">Cytoplasm</keyword>
<keyword id="KW-0444">Lipid biosynthesis</keyword>
<keyword id="KW-0443">Lipid metabolism</keyword>
<keyword id="KW-0594">Phospholipid biosynthesis</keyword>
<keyword id="KW-1208">Phospholipid metabolism</keyword>
<keyword id="KW-1185">Reference proteome</keyword>
<keyword id="KW-0808">Transferase</keyword>
<accession>Q9JXR8</accession>
<proteinExistence type="inferred from homology"/>